<organism>
    <name type="scientific">Zea mays</name>
    <name type="common">Maize</name>
    <dbReference type="NCBI Taxonomy" id="4577"/>
    <lineage>
        <taxon>Eukaryota</taxon>
        <taxon>Viridiplantae</taxon>
        <taxon>Streptophyta</taxon>
        <taxon>Embryophyta</taxon>
        <taxon>Tracheophyta</taxon>
        <taxon>Spermatophyta</taxon>
        <taxon>Magnoliopsida</taxon>
        <taxon>Liliopsida</taxon>
        <taxon>Poales</taxon>
        <taxon>Poaceae</taxon>
        <taxon>PACMAD clade</taxon>
        <taxon>Panicoideae</taxon>
        <taxon>Andropogonodae</taxon>
        <taxon>Andropogoneae</taxon>
        <taxon>Tripsacinae</taxon>
        <taxon>Zea</taxon>
    </lineage>
</organism>
<gene>
    <name evidence="8" type="ORF">ZEAMMB73_Zm00001d047440</name>
</gene>
<name>TS21I_MAIZE</name>
<keyword id="KW-0963">Cytoplasm</keyword>
<keyword id="KW-1185">Reference proteome</keyword>
<dbReference type="EMBL" id="MF614104">
    <property type="protein sequence ID" value="ATI25520.1"/>
    <property type="molecule type" value="Genomic_DNA"/>
</dbReference>
<dbReference type="EMBL" id="MF614105">
    <property type="protein sequence ID" value="ATI25521.1"/>
    <property type="molecule type" value="Genomic_DNA"/>
</dbReference>
<dbReference type="EMBL" id="MF614107">
    <property type="protein sequence ID" value="ATI25522.1"/>
    <property type="molecule type" value="Genomic_DNA"/>
</dbReference>
<dbReference type="EMBL" id="MF614108">
    <property type="protein sequence ID" value="ATI25523.1"/>
    <property type="molecule type" value="Genomic_DNA"/>
</dbReference>
<dbReference type="EMBL" id="MF614109">
    <property type="protein sequence ID" value="ATI25524.1"/>
    <property type="molecule type" value="Genomic_DNA"/>
</dbReference>
<dbReference type="EMBL" id="CM000785">
    <property type="protein sequence ID" value="AQL06449.1"/>
    <property type="molecule type" value="Genomic_DNA"/>
</dbReference>
<dbReference type="SMR" id="K7WDC8"/>
<dbReference type="FunCoup" id="K7WDC8">
    <property type="interactions" value="27"/>
</dbReference>
<dbReference type="PaxDb" id="4577-GRMZM2G011151_P01"/>
<dbReference type="eggNOG" id="ENOG502QUCN">
    <property type="taxonomic scope" value="Eukaryota"/>
</dbReference>
<dbReference type="HOGENOM" id="CLU_938012_0_0_1"/>
<dbReference type="InParanoid" id="K7WDC8"/>
<dbReference type="OMA" id="ILVANMD"/>
<dbReference type="Proteomes" id="UP000007305">
    <property type="component" value="Unplaced"/>
</dbReference>
<dbReference type="GO" id="GO:0005737">
    <property type="term" value="C:cytoplasm"/>
    <property type="evidence" value="ECO:0007669"/>
    <property type="project" value="UniProtKB-SubCell"/>
</dbReference>
<dbReference type="GO" id="GO:0010333">
    <property type="term" value="F:terpene synthase activity"/>
    <property type="evidence" value="ECO:0007669"/>
    <property type="project" value="InterPro"/>
</dbReference>
<dbReference type="GO" id="GO:0016114">
    <property type="term" value="P:terpenoid biosynthetic process"/>
    <property type="evidence" value="ECO:0007669"/>
    <property type="project" value="InterPro"/>
</dbReference>
<dbReference type="FunFam" id="1.50.10.130:FF:000006">
    <property type="entry name" value="Terpene synthase 7"/>
    <property type="match status" value="1"/>
</dbReference>
<dbReference type="Gene3D" id="1.10.600.10">
    <property type="entry name" value="Farnesyl Diphosphate Synthase"/>
    <property type="match status" value="1"/>
</dbReference>
<dbReference type="Gene3D" id="1.50.10.130">
    <property type="entry name" value="Terpene synthase, N-terminal domain"/>
    <property type="match status" value="1"/>
</dbReference>
<dbReference type="InterPro" id="IPR008949">
    <property type="entry name" value="Isoprenoid_synthase_dom_sf"/>
</dbReference>
<dbReference type="InterPro" id="IPR001906">
    <property type="entry name" value="Terpene_synth_N"/>
</dbReference>
<dbReference type="InterPro" id="IPR036965">
    <property type="entry name" value="Terpene_synth_N_sf"/>
</dbReference>
<dbReference type="InterPro" id="IPR050148">
    <property type="entry name" value="Terpene_synthase-like"/>
</dbReference>
<dbReference type="InterPro" id="IPR008930">
    <property type="entry name" value="Terpenoid_cyclase/PrenylTrfase"/>
</dbReference>
<dbReference type="PANTHER" id="PTHR31225:SF63">
    <property type="entry name" value="BETA-SELINENE SYNTHASE"/>
    <property type="match status" value="1"/>
</dbReference>
<dbReference type="PANTHER" id="PTHR31225">
    <property type="entry name" value="OS04G0344100 PROTEIN-RELATED"/>
    <property type="match status" value="1"/>
</dbReference>
<dbReference type="Pfam" id="PF01397">
    <property type="entry name" value="Terpene_synth"/>
    <property type="match status" value="1"/>
</dbReference>
<dbReference type="SUPFAM" id="SSF48239">
    <property type="entry name" value="Terpenoid cyclases/Protein prenyltransferases"/>
    <property type="match status" value="1"/>
</dbReference>
<dbReference type="SUPFAM" id="SSF48576">
    <property type="entry name" value="Terpenoid synthases"/>
    <property type="match status" value="1"/>
</dbReference>
<feature type="chain" id="PRO_0000447520" description="Inactive beta selinene synthase">
    <location>
        <begin position="1"/>
        <end position="297"/>
    </location>
</feature>
<reference key="1">
    <citation type="journal article" date="2017" name="Plant Physiol.">
        <title>Selinene volatiles are essential precursors for maize defense promoting fungal pathogen resistance.</title>
        <authorList>
            <person name="Ding Y."/>
            <person name="Huffaker A."/>
            <person name="Koellner T.G."/>
            <person name="Weckwerth P."/>
            <person name="Robert C.A.M."/>
            <person name="Spencer J.L."/>
            <person name="Lipka A.E."/>
            <person name="Schmelz E.A."/>
        </authorList>
    </citation>
    <scope>NUCLEOTIDE SEQUENCE [GENOMIC DNA]</scope>
    <source>
        <strain>cv. Ki11</strain>
        <strain>cv. Ki3</strain>
        <strain>cv. M162W</strain>
        <strain>cv. M37W</strain>
        <strain>cv. Missouri 18</strain>
    </source>
</reference>
<reference key="2">
    <citation type="journal article" date="2009" name="Science">
        <title>The B73 maize genome: complexity, diversity, and dynamics.</title>
        <authorList>
            <person name="Schnable P.S."/>
            <person name="Ware D."/>
            <person name="Fulton R.S."/>
            <person name="Stein J.C."/>
            <person name="Wei F."/>
            <person name="Pasternak S."/>
            <person name="Liang C."/>
            <person name="Zhang J."/>
            <person name="Fulton L."/>
            <person name="Graves T.A."/>
            <person name="Minx P."/>
            <person name="Reily A.D."/>
            <person name="Courtney L."/>
            <person name="Kruchowski S.S."/>
            <person name="Tomlinson C."/>
            <person name="Strong C."/>
            <person name="Delehaunty K."/>
            <person name="Fronick C."/>
            <person name="Courtney B."/>
            <person name="Rock S.M."/>
            <person name="Belter E."/>
            <person name="Du F."/>
            <person name="Kim K."/>
            <person name="Abbott R.M."/>
            <person name="Cotton M."/>
            <person name="Levy A."/>
            <person name="Marchetto P."/>
            <person name="Ochoa K."/>
            <person name="Jackson S.M."/>
            <person name="Gillam B."/>
            <person name="Chen W."/>
            <person name="Yan L."/>
            <person name="Higginbotham J."/>
            <person name="Cardenas M."/>
            <person name="Waligorski J."/>
            <person name="Applebaum E."/>
            <person name="Phelps L."/>
            <person name="Falcone J."/>
            <person name="Kanchi K."/>
            <person name="Thane T."/>
            <person name="Scimone A."/>
            <person name="Thane N."/>
            <person name="Henke J."/>
            <person name="Wang T."/>
            <person name="Ruppert J."/>
            <person name="Shah N."/>
            <person name="Rotter K."/>
            <person name="Hodges J."/>
            <person name="Ingenthron E."/>
            <person name="Cordes M."/>
            <person name="Kohlberg S."/>
            <person name="Sgro J."/>
            <person name="Delgado B."/>
            <person name="Mead K."/>
            <person name="Chinwalla A."/>
            <person name="Leonard S."/>
            <person name="Crouse K."/>
            <person name="Collura K."/>
            <person name="Kudrna D."/>
            <person name="Currie J."/>
            <person name="He R."/>
            <person name="Angelova A."/>
            <person name="Rajasekar S."/>
            <person name="Mueller T."/>
            <person name="Lomeli R."/>
            <person name="Scara G."/>
            <person name="Ko A."/>
            <person name="Delaney K."/>
            <person name="Wissotski M."/>
            <person name="Lopez G."/>
            <person name="Campos D."/>
            <person name="Braidotti M."/>
            <person name="Ashley E."/>
            <person name="Golser W."/>
            <person name="Kim H."/>
            <person name="Lee S."/>
            <person name="Lin J."/>
            <person name="Dujmic Z."/>
            <person name="Kim W."/>
            <person name="Talag J."/>
            <person name="Zuccolo A."/>
            <person name="Fan C."/>
            <person name="Sebastian A."/>
            <person name="Kramer M."/>
            <person name="Spiegel L."/>
            <person name="Nascimento L."/>
            <person name="Zutavern T."/>
            <person name="Miller B."/>
            <person name="Ambroise C."/>
            <person name="Muller S."/>
            <person name="Spooner W."/>
            <person name="Narechania A."/>
            <person name="Ren L."/>
            <person name="Wei S."/>
            <person name="Kumari S."/>
            <person name="Faga B."/>
            <person name="Levy M.J."/>
            <person name="McMahan L."/>
            <person name="Van Buren P."/>
            <person name="Vaughn M.W."/>
            <person name="Ying K."/>
            <person name="Yeh C.-T."/>
            <person name="Emrich S.J."/>
            <person name="Jia Y."/>
            <person name="Kalyanaraman A."/>
            <person name="Hsia A.-P."/>
            <person name="Barbazuk W.B."/>
            <person name="Baucom R.S."/>
            <person name="Brutnell T.P."/>
            <person name="Carpita N.C."/>
            <person name="Chaparro C."/>
            <person name="Chia J.-M."/>
            <person name="Deragon J.-M."/>
            <person name="Estill J.C."/>
            <person name="Fu Y."/>
            <person name="Jeddeloh J.A."/>
            <person name="Han Y."/>
            <person name="Lee H."/>
            <person name="Li P."/>
            <person name="Lisch D.R."/>
            <person name="Liu S."/>
            <person name="Liu Z."/>
            <person name="Nagel D.H."/>
            <person name="McCann M.C."/>
            <person name="SanMiguel P."/>
            <person name="Myers A.M."/>
            <person name="Nettleton D."/>
            <person name="Nguyen J."/>
            <person name="Penning B.W."/>
            <person name="Ponnala L."/>
            <person name="Schneider K.L."/>
            <person name="Schwartz D.C."/>
            <person name="Sharma A."/>
            <person name="Soderlund C."/>
            <person name="Springer N.M."/>
            <person name="Sun Q."/>
            <person name="Wang H."/>
            <person name="Waterman M."/>
            <person name="Westerman R."/>
            <person name="Wolfgruber T.K."/>
            <person name="Yang L."/>
            <person name="Yu Y."/>
            <person name="Zhang L."/>
            <person name="Zhou S."/>
            <person name="Zhu Q."/>
            <person name="Bennetzen J.L."/>
            <person name="Dawe R.K."/>
            <person name="Jiang J."/>
            <person name="Jiang N."/>
            <person name="Presting G.G."/>
            <person name="Wessler S.R."/>
            <person name="Aluru S."/>
            <person name="Martienssen R.A."/>
            <person name="Clifton S.W."/>
            <person name="McCombie W.R."/>
            <person name="Wing R.A."/>
            <person name="Wilson R.K."/>
        </authorList>
    </citation>
    <scope>NUCLEOTIDE SEQUENCE [LARGE SCALE GENOMIC DNA]</scope>
    <source>
        <strain>cv. B73</strain>
    </source>
</reference>
<reference key="3">
    <citation type="journal article" date="2019" name="Planta">
        <title>Biosynthesis and function of terpenoid defense compounds in maize (Zea mays).</title>
        <authorList>
            <person name="Block A.K."/>
            <person name="Vaughan M.M."/>
            <person name="Schmelz E.A."/>
            <person name="Christensen S.A."/>
        </authorList>
    </citation>
    <scope>REVIEW</scope>
</reference>
<comment type="function">
    <text evidence="3">Inactive selinene synthase.</text>
</comment>
<comment type="subunit">
    <text evidence="1">Monomer.</text>
</comment>
<comment type="subcellular location">
    <subcellularLocation>
        <location evidence="2">Cytoplasm</location>
    </subcellularLocation>
</comment>
<comment type="similarity">
    <text evidence="6">Belongs to the terpene synthase family.</text>
</comment>
<comment type="caution">
    <text evidence="7">The allele found in cv. Missouri 17 (AC A0A291LSD6) encodes an active enzyme while the allele found in cv. B73 contains a frame shift mutation.</text>
</comment>
<sequence length="297" mass="33338">MGERANFLKGEVRKKFEAAAMSAIDAAMLVDAVVHLGIDHCFREEIATALRSVHEDEEGEFGSCDDLHTVAVRFLVLRQHGLWVSADVFDKFRDDKGSFSKSLLCSNPRGLLSLYNAAHMAVTPEEKVLDDAIAFARSHLVEAMIGELRSPMVEQVSRSFDIPLPRFSRRLESMHYIAEYGQEEEGHDAQILELARLEFELVRSLHLRELREICSAEYGATGEEAFAFIANMTENAWRKINQACMEMDPAMLPAFKVAVVDLSRSIEIIYLGGKRDAYTFGSNLKDLVTSLFLKPCA</sequence>
<protein>
    <recommendedName>
        <fullName evidence="9">Inactive beta selinene synthase</fullName>
    </recommendedName>
    <alternativeName>
        <fullName evidence="5">Terpene synthase 21</fullName>
        <shortName evidence="4">Zmtps21</shortName>
    </alternativeName>
</protein>
<proteinExistence type="inferred from homology"/>
<evidence type="ECO:0000250" key="1">
    <source>
        <dbReference type="UniProtKB" id="Q6JD73"/>
    </source>
</evidence>
<evidence type="ECO:0000250" key="2">
    <source>
        <dbReference type="UniProtKB" id="Q6Q3H2"/>
    </source>
</evidence>
<evidence type="ECO:0000269" key="3">
    <source>
    </source>
</evidence>
<evidence type="ECO:0000303" key="4">
    <source>
    </source>
</evidence>
<evidence type="ECO:0000303" key="5">
    <source>
    </source>
</evidence>
<evidence type="ECO:0000305" key="6"/>
<evidence type="ECO:0000305" key="7">
    <source>
    </source>
</evidence>
<evidence type="ECO:0000312" key="8">
    <source>
        <dbReference type="EMBL" id="AQL06449.1"/>
    </source>
</evidence>
<evidence type="ECO:0000312" key="9">
    <source>
        <dbReference type="EMBL" id="ATI25520.1"/>
    </source>
</evidence>
<accession>K7WDC8</accession>
<accession>A0A291LSC6</accession>